<name>DPOL_ASFB7</name>
<feature type="chain" id="PRO_0000046502" description="DNA polymerase beta">
    <location>
        <begin position="1"/>
        <end position="1211"/>
    </location>
</feature>
<feature type="repeat" description="1">
    <location>
        <begin position="1074"/>
        <end position="1077"/>
    </location>
</feature>
<feature type="repeat" description="2">
    <location>
        <begin position="1078"/>
        <end position="1081"/>
    </location>
</feature>
<feature type="repeat" description="3">
    <location>
        <begin position="1082"/>
        <end position="1085"/>
    </location>
</feature>
<feature type="repeat" description="4">
    <location>
        <begin position="1086"/>
        <end position="1089"/>
    </location>
</feature>
<feature type="region of interest" description="4 X 4 AA tandem repeats of [NK]-[P]-A-G">
    <location>
        <begin position="1074"/>
        <end position="1089"/>
    </location>
</feature>
<feature type="splice variant" id="VSP_061338" description="In isoform 2." evidence="1">
    <location>
        <begin position="1"/>
        <end position="4"/>
    </location>
</feature>
<reference key="1">
    <citation type="journal article" date="1993" name="Gene">
        <title>The DNA polymerase-encoding gene of African swine fever virus: sequence and transcriptional analysis.</title>
        <authorList>
            <person name="Rodriguez J.M."/>
            <person name="Yanez R.J."/>
            <person name="Rodriguez J.F."/>
            <person name="Vinuela E."/>
            <person name="Salas M.L."/>
        </authorList>
    </citation>
    <scope>NUCLEOTIDE SEQUENCE [GENOMIC DNA]</scope>
</reference>
<reference key="2">
    <citation type="journal article" date="1995" name="Virology">
        <title>Analysis of the complete nucleotide sequence of African swine fever virus.</title>
        <authorList>
            <person name="Yanez R.J."/>
            <person name="Rodriguez J.M."/>
            <person name="Nogal M.L."/>
            <person name="Yuste L."/>
            <person name="Enriquez C."/>
            <person name="Rodriguez J.F."/>
            <person name="Vinuela E."/>
        </authorList>
    </citation>
    <scope>NUCLEOTIDE SEQUENCE [LARGE SCALE GENOMIC DNA]</scope>
</reference>
<reference key="3">
    <citation type="journal article" date="1994" name="Nucleic Acids Res.">
        <title>Genetic identification and nucleotide sequence of the DNA polymerase gene of African swine fever virus.</title>
        <authorList>
            <person name="Martins A."/>
            <person name="Ribeiro G."/>
            <person name="Marques M.I."/>
            <person name="Costa J.V."/>
        </authorList>
    </citation>
    <scope>IDENTIFICATION</scope>
</reference>
<reference key="4">
    <citation type="journal article" date="2020" name="J. Virol.">
        <title>The African Swine Fever Virus Transcriptome.</title>
        <authorList>
            <person name="Cackett G."/>
            <person name="Matelska D."/>
            <person name="Sykora M."/>
            <person name="Portugal R."/>
            <person name="Malecki M."/>
            <person name="Baehler J."/>
            <person name="Dixon L."/>
            <person name="Werner F."/>
        </authorList>
    </citation>
    <scope>INDUCTION</scope>
    <scope>ALTERNATIVE INITIATION</scope>
</reference>
<dbReference type="EC" id="2.7.7.7"/>
<dbReference type="EMBL" id="L19042">
    <property type="protein sequence ID" value="AAA42690.1"/>
    <property type="molecule type" value="Genomic_DNA"/>
</dbReference>
<dbReference type="EMBL" id="U18466">
    <property type="protein sequence ID" value="AAA65319.1"/>
    <property type="molecule type" value="Genomic_DNA"/>
</dbReference>
<dbReference type="RefSeq" id="NP_042783.1">
    <property type="nucleotide sequence ID" value="NC_001659.2"/>
</dbReference>
<dbReference type="PDB" id="8YWG">
    <property type="method" value="EM"/>
    <property type="resolution" value="3.28 A"/>
    <property type="chains" value="A=1-1211"/>
</dbReference>
<dbReference type="PDB" id="8YWI">
    <property type="method" value="EM"/>
    <property type="resolution" value="2.70 A"/>
    <property type="chains" value="A=1-1211"/>
</dbReference>
<dbReference type="PDB" id="8YWM">
    <property type="method" value="EM"/>
    <property type="resolution" value="3.20 A"/>
    <property type="chains" value="A=1-1211"/>
</dbReference>
<dbReference type="PDBsum" id="8YWG"/>
<dbReference type="PDBsum" id="8YWI"/>
<dbReference type="PDBsum" id="8YWM"/>
<dbReference type="SMR" id="P42489"/>
<dbReference type="GeneID" id="22220319"/>
<dbReference type="KEGG" id="vg:22220319"/>
<dbReference type="BRENDA" id="2.7.7.7">
    <property type="organism ID" value="176"/>
</dbReference>
<dbReference type="Proteomes" id="UP000000624">
    <property type="component" value="Segment"/>
</dbReference>
<dbReference type="GO" id="GO:0003677">
    <property type="term" value="F:DNA binding"/>
    <property type="evidence" value="ECO:0007669"/>
    <property type="project" value="UniProtKB-KW"/>
</dbReference>
<dbReference type="GO" id="GO:0003887">
    <property type="term" value="F:DNA-directed DNA polymerase activity"/>
    <property type="evidence" value="ECO:0007669"/>
    <property type="project" value="UniProtKB-KW"/>
</dbReference>
<dbReference type="GO" id="GO:0000166">
    <property type="term" value="F:nucleotide binding"/>
    <property type="evidence" value="ECO:0007669"/>
    <property type="project" value="InterPro"/>
</dbReference>
<dbReference type="GO" id="GO:0006261">
    <property type="term" value="P:DNA-templated DNA replication"/>
    <property type="evidence" value="ECO:0007669"/>
    <property type="project" value="TreeGrafter"/>
</dbReference>
<dbReference type="GO" id="GO:0039693">
    <property type="term" value="P:viral DNA genome replication"/>
    <property type="evidence" value="ECO:0007669"/>
    <property type="project" value="UniProtKB-KW"/>
</dbReference>
<dbReference type="Gene3D" id="1.10.132.60">
    <property type="entry name" value="DNA polymerase family B, C-terminal domain"/>
    <property type="match status" value="1"/>
</dbReference>
<dbReference type="Gene3D" id="1.10.287.690">
    <property type="entry name" value="Helix hairpin bin"/>
    <property type="match status" value="1"/>
</dbReference>
<dbReference type="Gene3D" id="3.90.1600.10">
    <property type="entry name" value="Palm domain of DNA polymerase"/>
    <property type="match status" value="1"/>
</dbReference>
<dbReference type="Gene3D" id="3.30.420.10">
    <property type="entry name" value="Ribonuclease H-like superfamily/Ribonuclease H"/>
    <property type="match status" value="1"/>
</dbReference>
<dbReference type="InterPro" id="IPR006172">
    <property type="entry name" value="DNA-dir_DNA_pol_B"/>
</dbReference>
<dbReference type="InterPro" id="IPR017964">
    <property type="entry name" value="DNA-dir_DNA_pol_B_CS"/>
</dbReference>
<dbReference type="InterPro" id="IPR006133">
    <property type="entry name" value="DNA-dir_DNA_pol_B_exonuc"/>
</dbReference>
<dbReference type="InterPro" id="IPR006134">
    <property type="entry name" value="DNA-dir_DNA_pol_B_multi_dom"/>
</dbReference>
<dbReference type="InterPro" id="IPR043502">
    <property type="entry name" value="DNA/RNA_pol_sf"/>
</dbReference>
<dbReference type="InterPro" id="IPR042087">
    <property type="entry name" value="DNA_pol_B_thumb"/>
</dbReference>
<dbReference type="InterPro" id="IPR023211">
    <property type="entry name" value="DNA_pol_palm_dom_sf"/>
</dbReference>
<dbReference type="InterPro" id="IPR050240">
    <property type="entry name" value="DNA_pol_type-B"/>
</dbReference>
<dbReference type="InterPro" id="IPR012337">
    <property type="entry name" value="RNaseH-like_sf"/>
</dbReference>
<dbReference type="InterPro" id="IPR036397">
    <property type="entry name" value="RNaseH_sf"/>
</dbReference>
<dbReference type="PANTHER" id="PTHR10322">
    <property type="entry name" value="DNA POLYMERASE CATALYTIC SUBUNIT"/>
    <property type="match status" value="1"/>
</dbReference>
<dbReference type="PANTHER" id="PTHR10322:SF23">
    <property type="entry name" value="DNA POLYMERASE DELTA CATALYTIC SUBUNIT"/>
    <property type="match status" value="1"/>
</dbReference>
<dbReference type="Pfam" id="PF00136">
    <property type="entry name" value="DNA_pol_B"/>
    <property type="match status" value="1"/>
</dbReference>
<dbReference type="Pfam" id="PF03104">
    <property type="entry name" value="DNA_pol_B_exo1"/>
    <property type="match status" value="1"/>
</dbReference>
<dbReference type="PRINTS" id="PR00106">
    <property type="entry name" value="DNAPOLB"/>
</dbReference>
<dbReference type="SMART" id="SM00486">
    <property type="entry name" value="POLBc"/>
    <property type="match status" value="1"/>
</dbReference>
<dbReference type="SUPFAM" id="SSF56672">
    <property type="entry name" value="DNA/RNA polymerases"/>
    <property type="match status" value="1"/>
</dbReference>
<dbReference type="SUPFAM" id="SSF53098">
    <property type="entry name" value="Ribonuclease H-like"/>
    <property type="match status" value="1"/>
</dbReference>
<dbReference type="PROSITE" id="PS00116">
    <property type="entry name" value="DNA_POLYMERASE_B"/>
    <property type="match status" value="1"/>
</dbReference>
<organism>
    <name type="scientific">African swine fever virus (strain Badajoz 1971 Vero-adapted)</name>
    <name type="common">Ba71V</name>
    <name type="synonym">ASFV</name>
    <dbReference type="NCBI Taxonomy" id="10498"/>
    <lineage>
        <taxon>Viruses</taxon>
        <taxon>Varidnaviria</taxon>
        <taxon>Bamfordvirae</taxon>
        <taxon>Nucleocytoviricota</taxon>
        <taxon>Pokkesviricetes</taxon>
        <taxon>Asfuvirales</taxon>
        <taxon>Asfarviridae</taxon>
        <taxon>Asfivirus</taxon>
        <taxon>African swine fever virus</taxon>
    </lineage>
</organism>
<proteinExistence type="evidence at protein level"/>
<evidence type="ECO:0000269" key="1">
    <source>
    </source>
</evidence>
<evidence type="ECO:0000303" key="2">
    <source>
    </source>
</evidence>
<evidence type="ECO:0000305" key="3"/>
<accession>P42489</accession>
<keyword id="KW-0002">3D-structure</keyword>
<keyword id="KW-0024">Alternative initiation</keyword>
<keyword id="KW-0235">DNA replication</keyword>
<keyword id="KW-0238">DNA-binding</keyword>
<keyword id="KW-0239">DNA-directed DNA polymerase</keyword>
<keyword id="KW-0244">Early protein</keyword>
<keyword id="KW-0548">Nucleotidyltransferase</keyword>
<keyword id="KW-1185">Reference proteome</keyword>
<keyword id="KW-0677">Repeat</keyword>
<keyword id="KW-0808">Transferase</keyword>
<keyword id="KW-1194">Viral DNA replication</keyword>
<gene>
    <name type="primary">DPOL</name>
    <name type="ordered locus">Ba71V-90</name>
    <name type="ORF">G1207R</name>
    <name type="ORF">G1211R</name>
</gene>
<sequence>MISIMDRSEIVARENPVITQRVTNLLQTNAPLLFMPIDIHEVRYGAYTLFMYGSLENGYKAEVRIENIPVFFDVQIEFNDTNQLFLKSLLTAENIAYERLETLTQRPVMGYREKEKEFAPYIRIFFKSLYEQRKAITYLNNMGYNTAADDTTCYYRMVSRELKLPLTSWIQLQHYSYEPRGLVHRFSVTPEDLVSYQDDGPTDHSIVMAYDIETYSPVKGTVPDPNQANDVVFMICMRIFWIHSTEPLASTCITMAPCKKSSEWTTILCSSEKNLLLSFAEQFSRWAPDICTGFNDSRYDWPFIVEKSMQHGILEEIFNKMSLFWHQKLDTILKCYYVKEKRVKISAEKSIISSFLHTPGCLPIDVRNMCMQLYPKAEKTSLKAFLENCGLDSKVDLPYHLMWKYYETRDSEKMADVAYYCIIDAQRCQDLLVRHNVIPDRREVGILSYTSLYDCIYYAGGHKVCNMLIAYAIHDEYGRIACSTIARGKREHGKYPGAFVIDPVKGLEQDKPTTGLDFASLYPSLIMAYNFSPEKFVASRDEAKSLMAKGESLHYVSFHFNNRLVEGWFVRHNNVPDKMGLYPKVLIDLLNKRTALKQELKKLGEKKECIHESHPGFKELQFRHAMVDAKQKALKIFMNTFYGEAGNNLSPFFLLPLAGGVTSSGQYNLKLVYNFVINKGYGIKYGDTDSLYITCPDSLYTEVTDAYLNSQKTIKHYEQLCHEKVLLSMKAMSTLCAEVNEYLRQDNGTSYLRMAYEEVLFPVCFTGKKKYYGIAHVNTPNFNTKELFIRGIDIIKQGQTKLTKTIGTRIMEESMKLRRPEDHRPPLIEIVKTVLKDAVVNMKQWNFEDFIQTDAWRPDKDNKAVQIFMSRMHARREQLKKHGAAASQFAEPEPGERFSYVIVEKQVQFDIQGHRTDSSRKGDKMEYVSEAKAKNLPIDILFYINNYVLGLCARFINENEEFQPPDNVSNKDEYAQRRAKSYLQKFVQSIHPKDKSVIKQGIVHRQCYKYVHQEIKKKIGIFADLYKEFFNNTTNPIESFIQSARFMIQYSDGEQKVNHSMKKMVEQRATLASKPAGKPAGNPAGNPAGNALMRAIFTQLITEEKKIVQALYNKGDAIHDLLTYIINNINYKIATFQTKQMLTFEFSSTHVELLLKLNKTWLILAGIHVAKKHLQALLDSYNNEPPSRTFIQQAIEEECGSIKPSCYDFIS</sequence>
<organismHost>
    <name type="scientific">Ornithodoros</name>
    <name type="common">relapsing fever ticks</name>
    <dbReference type="NCBI Taxonomy" id="6937"/>
</organismHost>
<organismHost>
    <name type="scientific">Sus scrofa</name>
    <name type="common">Pig</name>
    <dbReference type="NCBI Taxonomy" id="9823"/>
</organismHost>
<comment type="function">
    <text>DNA-directed DNA polymerase involved in viral DNA replication.</text>
</comment>
<comment type="catalytic activity">
    <reaction>
        <text>DNA(n) + a 2'-deoxyribonucleoside 5'-triphosphate = DNA(n+1) + diphosphate</text>
        <dbReference type="Rhea" id="RHEA:22508"/>
        <dbReference type="Rhea" id="RHEA-COMP:17339"/>
        <dbReference type="Rhea" id="RHEA-COMP:17340"/>
        <dbReference type="ChEBI" id="CHEBI:33019"/>
        <dbReference type="ChEBI" id="CHEBI:61560"/>
        <dbReference type="ChEBI" id="CHEBI:173112"/>
        <dbReference type="EC" id="2.7.7.7"/>
    </reaction>
</comment>
<comment type="alternative products">
    <event type="alternative initiation"/>
    <isoform>
        <id>P42489-1</id>
        <name>1</name>
        <sequence type="displayed"/>
    </isoform>
    <isoform>
        <id>P42489-2</id>
        <name>2</name>
        <sequence type="described" ref="VSP_061338"/>
    </isoform>
</comment>
<comment type="induction">
    <text evidence="1">Expressed in the early phase of the viral replicative cycle.</text>
</comment>
<comment type="miscellaneous">
    <text>Consistent with its intracellular location, ASFV encodes its own replicative DNA polymerase and three base excision repair enzymes: a class II AP endonuclease, the repair polymerase Pol X, and an ATP-dependent DNA ligase.</text>
</comment>
<comment type="similarity">
    <text evidence="3">Belongs to the DNA polymerase type-B family.</text>
</comment>
<protein>
    <recommendedName>
        <fullName evidence="2">DNA polymerase beta</fullName>
        <ecNumber>2.7.7.7</ecNumber>
    </recommendedName>
</protein>